<gene>
    <name type="primary">folP</name>
    <name type="ordered locus">SE_2269</name>
</gene>
<protein>
    <recommendedName>
        <fullName>Dihydropteroate synthase</fullName>
        <shortName>DHPS</shortName>
        <ecNumber>2.5.1.15</ecNumber>
    </recommendedName>
    <alternativeName>
        <fullName>Dihydropteroate pyrophosphorylase</fullName>
    </alternativeName>
</protein>
<dbReference type="EC" id="2.5.1.15"/>
<dbReference type="EMBL" id="AE015929">
    <property type="protein sequence ID" value="AAO05911.1"/>
    <property type="molecule type" value="Genomic_DNA"/>
</dbReference>
<dbReference type="RefSeq" id="NP_765824.1">
    <property type="nucleotide sequence ID" value="NC_004461.1"/>
</dbReference>
<dbReference type="RefSeq" id="WP_002485036.1">
    <property type="nucleotide sequence ID" value="NC_004461.1"/>
</dbReference>
<dbReference type="SMR" id="Q8CMT7"/>
<dbReference type="KEGG" id="sep:SE_2269"/>
<dbReference type="PATRIC" id="fig|176280.10.peg.2212"/>
<dbReference type="eggNOG" id="COG0294">
    <property type="taxonomic scope" value="Bacteria"/>
</dbReference>
<dbReference type="HOGENOM" id="CLU_008023_0_2_9"/>
<dbReference type="OrthoDB" id="9811744at2"/>
<dbReference type="UniPathway" id="UPA00077">
    <property type="reaction ID" value="UER00156"/>
</dbReference>
<dbReference type="Proteomes" id="UP000001411">
    <property type="component" value="Chromosome"/>
</dbReference>
<dbReference type="GO" id="GO:0005829">
    <property type="term" value="C:cytosol"/>
    <property type="evidence" value="ECO:0007669"/>
    <property type="project" value="TreeGrafter"/>
</dbReference>
<dbReference type="GO" id="GO:0004156">
    <property type="term" value="F:dihydropteroate synthase activity"/>
    <property type="evidence" value="ECO:0007669"/>
    <property type="project" value="UniProtKB-EC"/>
</dbReference>
<dbReference type="GO" id="GO:0046872">
    <property type="term" value="F:metal ion binding"/>
    <property type="evidence" value="ECO:0007669"/>
    <property type="project" value="UniProtKB-KW"/>
</dbReference>
<dbReference type="GO" id="GO:0046656">
    <property type="term" value="P:folic acid biosynthetic process"/>
    <property type="evidence" value="ECO:0007669"/>
    <property type="project" value="UniProtKB-KW"/>
</dbReference>
<dbReference type="GO" id="GO:0046654">
    <property type="term" value="P:tetrahydrofolate biosynthetic process"/>
    <property type="evidence" value="ECO:0007669"/>
    <property type="project" value="UniProtKB-UniPathway"/>
</dbReference>
<dbReference type="CDD" id="cd00739">
    <property type="entry name" value="DHPS"/>
    <property type="match status" value="1"/>
</dbReference>
<dbReference type="Gene3D" id="3.20.20.20">
    <property type="entry name" value="Dihydropteroate synthase-like"/>
    <property type="match status" value="1"/>
</dbReference>
<dbReference type="InterPro" id="IPR045031">
    <property type="entry name" value="DHP_synth-like"/>
</dbReference>
<dbReference type="InterPro" id="IPR006390">
    <property type="entry name" value="DHP_synth_dom"/>
</dbReference>
<dbReference type="InterPro" id="IPR011005">
    <property type="entry name" value="Dihydropteroate_synth-like_sf"/>
</dbReference>
<dbReference type="InterPro" id="IPR000489">
    <property type="entry name" value="Pterin-binding_dom"/>
</dbReference>
<dbReference type="NCBIfam" id="TIGR01496">
    <property type="entry name" value="DHPS"/>
    <property type="match status" value="1"/>
</dbReference>
<dbReference type="PANTHER" id="PTHR20941">
    <property type="entry name" value="FOLATE SYNTHESIS PROTEINS"/>
    <property type="match status" value="1"/>
</dbReference>
<dbReference type="PANTHER" id="PTHR20941:SF1">
    <property type="entry name" value="FOLIC ACID SYNTHESIS PROTEIN FOL1"/>
    <property type="match status" value="1"/>
</dbReference>
<dbReference type="Pfam" id="PF00809">
    <property type="entry name" value="Pterin_bind"/>
    <property type="match status" value="1"/>
</dbReference>
<dbReference type="SUPFAM" id="SSF51717">
    <property type="entry name" value="Dihydropteroate synthetase-like"/>
    <property type="match status" value="1"/>
</dbReference>
<dbReference type="PROSITE" id="PS00792">
    <property type="entry name" value="DHPS_1"/>
    <property type="match status" value="1"/>
</dbReference>
<dbReference type="PROSITE" id="PS00793">
    <property type="entry name" value="DHPS_2"/>
    <property type="match status" value="1"/>
</dbReference>
<dbReference type="PROSITE" id="PS50972">
    <property type="entry name" value="PTERIN_BINDING"/>
    <property type="match status" value="1"/>
</dbReference>
<name>DHPS_STAES</name>
<keyword id="KW-0289">Folate biosynthesis</keyword>
<keyword id="KW-0460">Magnesium</keyword>
<keyword id="KW-0479">Metal-binding</keyword>
<keyword id="KW-0808">Transferase</keyword>
<evidence type="ECO:0000250" key="1"/>
<evidence type="ECO:0000250" key="2">
    <source>
        <dbReference type="UniProtKB" id="P0AC13"/>
    </source>
</evidence>
<evidence type="ECO:0000250" key="3">
    <source>
        <dbReference type="UniProtKB" id="P9WND1"/>
    </source>
</evidence>
<evidence type="ECO:0000255" key="4">
    <source>
        <dbReference type="PROSITE-ProRule" id="PRU00334"/>
    </source>
</evidence>
<evidence type="ECO:0000305" key="5"/>
<sequence length="272" mass="30369">MIKTKIMGILNVTPDSFSDGGQYHSVDQAVKRAKEMIDEGVDIIDVGGVSTRPGHKEVSHKEVSLKEEMNRVLPVVESIVKYDVQISVDTFRSEVAEACLKLGVSMINDQWAGLFDSNMFNVVSQYGAEIVLTHNGDGHRDKPVVEEMLVSLLAQANKAELAGIPHNKIWLDPGIGFPKTREEENEVMARLDELVATEYPVLLATSRKRYIKEMMNQDSSPSDRDEATAATTAYGIMKGVRGVRVHNVLLNTRLAQSMDFLKENEYERHHLS</sequence>
<reference key="1">
    <citation type="journal article" date="2003" name="Mol. Microbiol.">
        <title>Genome-based analysis of virulence genes in a non-biofilm-forming Staphylococcus epidermidis strain (ATCC 12228).</title>
        <authorList>
            <person name="Zhang Y.-Q."/>
            <person name="Ren S.-X."/>
            <person name="Li H.-L."/>
            <person name="Wang Y.-X."/>
            <person name="Fu G."/>
            <person name="Yang J."/>
            <person name="Qin Z.-Q."/>
            <person name="Miao Y.-G."/>
            <person name="Wang W.-Y."/>
            <person name="Chen R.-S."/>
            <person name="Shen Y."/>
            <person name="Chen Z."/>
            <person name="Yuan Z.-H."/>
            <person name="Zhao G.-P."/>
            <person name="Qu D."/>
            <person name="Danchin A."/>
            <person name="Wen Y.-M."/>
        </authorList>
    </citation>
    <scope>NUCLEOTIDE SEQUENCE [LARGE SCALE GENOMIC DNA]</scope>
    <source>
        <strain>ATCC 12228 / FDA PCI 1200</strain>
    </source>
</reference>
<comment type="function">
    <text evidence="2">Catalyzes the condensation of para-aminobenzoate (pABA) with 6-hydroxymethyl-7,8-dihydropterin diphosphate (DHPt-PP) to form 7,8-dihydropteroate (H2Pte), the immediate precursor of folate derivatives.</text>
</comment>
<comment type="catalytic activity">
    <reaction evidence="2">
        <text>(7,8-dihydropterin-6-yl)methyl diphosphate + 4-aminobenzoate = 7,8-dihydropteroate + diphosphate</text>
        <dbReference type="Rhea" id="RHEA:19949"/>
        <dbReference type="ChEBI" id="CHEBI:17836"/>
        <dbReference type="ChEBI" id="CHEBI:17839"/>
        <dbReference type="ChEBI" id="CHEBI:33019"/>
        <dbReference type="ChEBI" id="CHEBI:72950"/>
        <dbReference type="EC" id="2.5.1.15"/>
    </reaction>
</comment>
<comment type="cofactor">
    <cofactor evidence="2">
        <name>Mg(2+)</name>
        <dbReference type="ChEBI" id="CHEBI:18420"/>
    </cofactor>
</comment>
<comment type="pathway">
    <text>Cofactor biosynthesis; tetrahydrofolate biosynthesis; 7,8-dihydrofolate from 2-amino-4-hydroxy-6-hydroxymethyl-7,8-dihydropteridine diphosphate and 4-aminobenzoate: step 1/2.</text>
</comment>
<comment type="subunit">
    <text evidence="1">Homodimer.</text>
</comment>
<comment type="similarity">
    <text evidence="5">Belongs to the DHPS family.</text>
</comment>
<organism>
    <name type="scientific">Staphylococcus epidermidis (strain ATCC 12228 / FDA PCI 1200)</name>
    <dbReference type="NCBI Taxonomy" id="176280"/>
    <lineage>
        <taxon>Bacteria</taxon>
        <taxon>Bacillati</taxon>
        <taxon>Bacillota</taxon>
        <taxon>Bacilli</taxon>
        <taxon>Bacillales</taxon>
        <taxon>Staphylococcaceae</taxon>
        <taxon>Staphylococcus</taxon>
    </lineage>
</organism>
<accession>Q8CMT7</accession>
<proteinExistence type="inferred from homology"/>
<feature type="chain" id="PRO_0000168227" description="Dihydropteroate synthase">
    <location>
        <begin position="1"/>
        <end position="272"/>
    </location>
</feature>
<feature type="domain" description="Pterin-binding" evidence="4">
    <location>
        <begin position="1"/>
        <end position="256"/>
    </location>
</feature>
<feature type="binding site" evidence="3">
    <location>
        <position position="11"/>
    </location>
    <ligand>
        <name>Mg(2+)</name>
        <dbReference type="ChEBI" id="CHEBI:18420"/>
    </ligand>
</feature>
<feature type="binding site" evidence="2">
    <location>
        <position position="51"/>
    </location>
    <ligand>
        <name>(7,8-dihydropterin-6-yl)methyl diphosphate</name>
        <dbReference type="ChEBI" id="CHEBI:72950"/>
    </ligand>
</feature>
<feature type="binding site" evidence="2">
    <location>
        <position position="89"/>
    </location>
    <ligand>
        <name>(7,8-dihydropterin-6-yl)methyl diphosphate</name>
        <dbReference type="ChEBI" id="CHEBI:72950"/>
    </ligand>
</feature>
<feature type="binding site" evidence="2">
    <location>
        <position position="108"/>
    </location>
    <ligand>
        <name>(7,8-dihydropterin-6-yl)methyl diphosphate</name>
        <dbReference type="ChEBI" id="CHEBI:72950"/>
    </ligand>
</feature>
<feature type="binding site" evidence="2">
    <location>
        <position position="172"/>
    </location>
    <ligand>
        <name>(7,8-dihydropterin-6-yl)methyl diphosphate</name>
        <dbReference type="ChEBI" id="CHEBI:72950"/>
    </ligand>
</feature>
<feature type="binding site" evidence="2">
    <location>
        <position position="208"/>
    </location>
    <ligand>
        <name>(7,8-dihydropterin-6-yl)methyl diphosphate</name>
        <dbReference type="ChEBI" id="CHEBI:72950"/>
    </ligand>
</feature>
<feature type="binding site" evidence="2">
    <location>
        <begin position="244"/>
        <end position="246"/>
    </location>
    <ligand>
        <name>(7,8-dihydropterin-6-yl)methyl diphosphate</name>
        <dbReference type="ChEBI" id="CHEBI:72950"/>
    </ligand>
</feature>